<feature type="chain" id="PRO_0000387069" description="Ribosomal RNA small subunit methyltransferase H">
    <location>
        <begin position="1"/>
        <end position="341"/>
    </location>
</feature>
<feature type="binding site" evidence="1">
    <location>
        <begin position="47"/>
        <end position="49"/>
    </location>
    <ligand>
        <name>S-adenosyl-L-methionine</name>
        <dbReference type="ChEBI" id="CHEBI:59789"/>
    </ligand>
</feature>
<feature type="binding site" evidence="1">
    <location>
        <position position="64"/>
    </location>
    <ligand>
        <name>S-adenosyl-L-methionine</name>
        <dbReference type="ChEBI" id="CHEBI:59789"/>
    </ligand>
</feature>
<feature type="binding site" evidence="1">
    <location>
        <position position="91"/>
    </location>
    <ligand>
        <name>S-adenosyl-L-methionine</name>
        <dbReference type="ChEBI" id="CHEBI:59789"/>
    </ligand>
</feature>
<feature type="binding site" evidence="1">
    <location>
        <position position="109"/>
    </location>
    <ligand>
        <name>S-adenosyl-L-methionine</name>
        <dbReference type="ChEBI" id="CHEBI:59789"/>
    </ligand>
</feature>
<feature type="binding site" evidence="1">
    <location>
        <position position="116"/>
    </location>
    <ligand>
        <name>S-adenosyl-L-methionine</name>
        <dbReference type="ChEBI" id="CHEBI:59789"/>
    </ligand>
</feature>
<dbReference type="EC" id="2.1.1.199" evidence="1"/>
<dbReference type="EMBL" id="CP001622">
    <property type="protein sequence ID" value="ACS57122.1"/>
    <property type="molecule type" value="Genomic_DNA"/>
</dbReference>
<dbReference type="SMR" id="C6ARU7"/>
<dbReference type="KEGG" id="rlg:Rleg_2862"/>
<dbReference type="HOGENOM" id="CLU_038422_1_1_5"/>
<dbReference type="OrthoDB" id="9806637at2"/>
<dbReference type="Proteomes" id="UP000002256">
    <property type="component" value="Chromosome"/>
</dbReference>
<dbReference type="GO" id="GO:0005737">
    <property type="term" value="C:cytoplasm"/>
    <property type="evidence" value="ECO:0007669"/>
    <property type="project" value="UniProtKB-SubCell"/>
</dbReference>
<dbReference type="GO" id="GO:0071424">
    <property type="term" value="F:rRNA (cytosine-N4-)-methyltransferase activity"/>
    <property type="evidence" value="ECO:0007669"/>
    <property type="project" value="UniProtKB-UniRule"/>
</dbReference>
<dbReference type="GO" id="GO:0070475">
    <property type="term" value="P:rRNA base methylation"/>
    <property type="evidence" value="ECO:0007669"/>
    <property type="project" value="UniProtKB-UniRule"/>
</dbReference>
<dbReference type="Gene3D" id="1.10.150.170">
    <property type="entry name" value="Putative methyltransferase TM0872, insert domain"/>
    <property type="match status" value="1"/>
</dbReference>
<dbReference type="Gene3D" id="3.40.50.150">
    <property type="entry name" value="Vaccinia Virus protein VP39"/>
    <property type="match status" value="1"/>
</dbReference>
<dbReference type="HAMAP" id="MF_01007">
    <property type="entry name" value="16SrRNA_methyltr_H"/>
    <property type="match status" value="1"/>
</dbReference>
<dbReference type="InterPro" id="IPR002903">
    <property type="entry name" value="RsmH"/>
</dbReference>
<dbReference type="InterPro" id="IPR023397">
    <property type="entry name" value="SAM-dep_MeTrfase_MraW_recog"/>
</dbReference>
<dbReference type="InterPro" id="IPR029063">
    <property type="entry name" value="SAM-dependent_MTases_sf"/>
</dbReference>
<dbReference type="NCBIfam" id="TIGR00006">
    <property type="entry name" value="16S rRNA (cytosine(1402)-N(4))-methyltransferase RsmH"/>
    <property type="match status" value="1"/>
</dbReference>
<dbReference type="PANTHER" id="PTHR11265:SF0">
    <property type="entry name" value="12S RRNA N4-METHYLCYTIDINE METHYLTRANSFERASE"/>
    <property type="match status" value="1"/>
</dbReference>
<dbReference type="PANTHER" id="PTHR11265">
    <property type="entry name" value="S-ADENOSYL-METHYLTRANSFERASE MRAW"/>
    <property type="match status" value="1"/>
</dbReference>
<dbReference type="Pfam" id="PF01795">
    <property type="entry name" value="Methyltransf_5"/>
    <property type="match status" value="1"/>
</dbReference>
<dbReference type="PIRSF" id="PIRSF004486">
    <property type="entry name" value="MraW"/>
    <property type="match status" value="1"/>
</dbReference>
<dbReference type="SUPFAM" id="SSF81799">
    <property type="entry name" value="Putative methyltransferase TM0872, insert domain"/>
    <property type="match status" value="1"/>
</dbReference>
<dbReference type="SUPFAM" id="SSF53335">
    <property type="entry name" value="S-adenosyl-L-methionine-dependent methyltransferases"/>
    <property type="match status" value="1"/>
</dbReference>
<reference key="1">
    <citation type="journal article" date="2010" name="Stand. Genomic Sci.">
        <title>Complete genome sequence of Rhizobium leguminosarum bv. trifolii strain WSM1325, an effective microsymbiont of annual Mediterranean clovers.</title>
        <authorList>
            <person name="Reeve W."/>
            <person name="O'Hara G."/>
            <person name="Chain P."/>
            <person name="Ardley J."/>
            <person name="Brau L."/>
            <person name="Nandesena K."/>
            <person name="Tiwari R."/>
            <person name="Copeland A."/>
            <person name="Nolan M."/>
            <person name="Han C."/>
            <person name="Brettin T."/>
            <person name="Land M."/>
            <person name="Ovchinikova G."/>
            <person name="Ivanova N."/>
            <person name="Mavromatis K."/>
            <person name="Markowitz V."/>
            <person name="Kyrpides N."/>
            <person name="Melino V."/>
            <person name="Denton M."/>
            <person name="Yates R."/>
            <person name="Howieson J."/>
        </authorList>
    </citation>
    <scope>NUCLEOTIDE SEQUENCE [LARGE SCALE GENOMIC DNA]</scope>
    <source>
        <strain>WSM1325</strain>
    </source>
</reference>
<protein>
    <recommendedName>
        <fullName evidence="1">Ribosomal RNA small subunit methyltransferase H</fullName>
        <ecNumber evidence="1">2.1.1.199</ecNumber>
    </recommendedName>
    <alternativeName>
        <fullName evidence="1">16S rRNA m(4)C1402 methyltransferase</fullName>
    </alternativeName>
    <alternativeName>
        <fullName evidence="1">rRNA (cytosine-N(4)-)-methyltransferase RsmH</fullName>
    </alternativeName>
</protein>
<comment type="function">
    <text evidence="1">Specifically methylates the N4 position of cytidine in position 1402 (C1402) of 16S rRNA.</text>
</comment>
<comment type="catalytic activity">
    <reaction evidence="1">
        <text>cytidine(1402) in 16S rRNA + S-adenosyl-L-methionine = N(4)-methylcytidine(1402) in 16S rRNA + S-adenosyl-L-homocysteine + H(+)</text>
        <dbReference type="Rhea" id="RHEA:42928"/>
        <dbReference type="Rhea" id="RHEA-COMP:10286"/>
        <dbReference type="Rhea" id="RHEA-COMP:10287"/>
        <dbReference type="ChEBI" id="CHEBI:15378"/>
        <dbReference type="ChEBI" id="CHEBI:57856"/>
        <dbReference type="ChEBI" id="CHEBI:59789"/>
        <dbReference type="ChEBI" id="CHEBI:74506"/>
        <dbReference type="ChEBI" id="CHEBI:82748"/>
        <dbReference type="EC" id="2.1.1.199"/>
    </reaction>
</comment>
<comment type="subcellular location">
    <subcellularLocation>
        <location evidence="1">Cytoplasm</location>
    </subcellularLocation>
</comment>
<comment type="similarity">
    <text evidence="1">Belongs to the methyltransferase superfamily. RsmH family.</text>
</comment>
<evidence type="ECO:0000255" key="1">
    <source>
        <dbReference type="HAMAP-Rule" id="MF_01007"/>
    </source>
</evidence>
<organism>
    <name type="scientific">Rhizobium leguminosarum bv. trifolii (strain WSM1325)</name>
    <dbReference type="NCBI Taxonomy" id="395491"/>
    <lineage>
        <taxon>Bacteria</taxon>
        <taxon>Pseudomonadati</taxon>
        <taxon>Pseudomonadota</taxon>
        <taxon>Alphaproteobacteria</taxon>
        <taxon>Hyphomicrobiales</taxon>
        <taxon>Rhizobiaceae</taxon>
        <taxon>Rhizobium/Agrobacterium group</taxon>
        <taxon>Rhizobium</taxon>
    </lineage>
</organism>
<sequence length="341" mass="35653">MVANPGGGSTDAGGGPVRHIPVLLAEVLAALAPAPGKLILDGTFGAGGYSSAILAAGAEVIALDRDPTAIAAGQAMVAAHGGRFKLVHSQFSHLADHAPQGGLDGVVLDIGVSSMQIDEAERGFSFQKNGPLDMRMSAEGVSAADVVNRAKVADLIRIFHFLGEESQAPRIAHAIEKRRAEKPFETTRDLAGLIELVTPRKMKDKIHPATRVFQALRIFVNDELGELAQALFAAEAALKPGGRLVAVTFHSLEDRIVKKFFSDRAGKASGSRHLPVAHERAATFAAIGKPMVSASEAEAEINPRARSAKLRAGLRTEAAAEAADMSLFGFPNLASLGKLGG</sequence>
<gene>
    <name evidence="1" type="primary">rsmH</name>
    <name type="synonym">mraW</name>
    <name type="ordered locus">Rleg_2862</name>
</gene>
<name>RSMH_RHILS</name>
<proteinExistence type="inferred from homology"/>
<keyword id="KW-0963">Cytoplasm</keyword>
<keyword id="KW-0489">Methyltransferase</keyword>
<keyword id="KW-0698">rRNA processing</keyword>
<keyword id="KW-0949">S-adenosyl-L-methionine</keyword>
<keyword id="KW-0808">Transferase</keyword>
<accession>C6ARU7</accession>